<proteinExistence type="evidence at protein level"/>
<protein>
    <recommendedName>
        <fullName>Anaphase-promoting complex subunit 4</fullName>
        <shortName>APC4</shortName>
    </recommendedName>
    <alternativeName>
        <fullName>Cyclosome subunit 4</fullName>
    </alternativeName>
</protein>
<evidence type="ECO:0000250" key="1">
    <source>
        <dbReference type="UniProtKB" id="Q9UJX5"/>
    </source>
</evidence>
<evidence type="ECO:0000256" key="2">
    <source>
        <dbReference type="SAM" id="MobiDB-lite"/>
    </source>
</evidence>
<evidence type="ECO:0000305" key="3"/>
<evidence type="ECO:0007744" key="4">
    <source>
    </source>
</evidence>
<gene>
    <name type="primary">Anapc4</name>
    <name type="synonym">D5Ertd249e</name>
</gene>
<reference key="1">
    <citation type="journal article" date="2004" name="Genome Res.">
        <title>The status, quality, and expansion of the NIH full-length cDNA project: the Mammalian Gene Collection (MGC).</title>
        <authorList>
            <consortium name="The MGC Project Team"/>
        </authorList>
    </citation>
    <scope>NUCLEOTIDE SEQUENCE [LARGE SCALE MRNA]</scope>
    <source>
        <tissue>Eye</tissue>
        <tissue>Retina</tissue>
    </source>
</reference>
<reference key="2">
    <citation type="journal article" date="2005" name="Science">
        <title>The transcriptional landscape of the mammalian genome.</title>
        <authorList>
            <person name="Carninci P."/>
            <person name="Kasukawa T."/>
            <person name="Katayama S."/>
            <person name="Gough J."/>
            <person name="Frith M.C."/>
            <person name="Maeda N."/>
            <person name="Oyama R."/>
            <person name="Ravasi T."/>
            <person name="Lenhard B."/>
            <person name="Wells C."/>
            <person name="Kodzius R."/>
            <person name="Shimokawa K."/>
            <person name="Bajic V.B."/>
            <person name="Brenner S.E."/>
            <person name="Batalov S."/>
            <person name="Forrest A.R."/>
            <person name="Zavolan M."/>
            <person name="Davis M.J."/>
            <person name="Wilming L.G."/>
            <person name="Aidinis V."/>
            <person name="Allen J.E."/>
            <person name="Ambesi-Impiombato A."/>
            <person name="Apweiler R."/>
            <person name="Aturaliya R.N."/>
            <person name="Bailey T.L."/>
            <person name="Bansal M."/>
            <person name="Baxter L."/>
            <person name="Beisel K.W."/>
            <person name="Bersano T."/>
            <person name="Bono H."/>
            <person name="Chalk A.M."/>
            <person name="Chiu K.P."/>
            <person name="Choudhary V."/>
            <person name="Christoffels A."/>
            <person name="Clutterbuck D.R."/>
            <person name="Crowe M.L."/>
            <person name="Dalla E."/>
            <person name="Dalrymple B.P."/>
            <person name="de Bono B."/>
            <person name="Della Gatta G."/>
            <person name="di Bernardo D."/>
            <person name="Down T."/>
            <person name="Engstrom P."/>
            <person name="Fagiolini M."/>
            <person name="Faulkner G."/>
            <person name="Fletcher C.F."/>
            <person name="Fukushima T."/>
            <person name="Furuno M."/>
            <person name="Futaki S."/>
            <person name="Gariboldi M."/>
            <person name="Georgii-Hemming P."/>
            <person name="Gingeras T.R."/>
            <person name="Gojobori T."/>
            <person name="Green R.E."/>
            <person name="Gustincich S."/>
            <person name="Harbers M."/>
            <person name="Hayashi Y."/>
            <person name="Hensch T.K."/>
            <person name="Hirokawa N."/>
            <person name="Hill D."/>
            <person name="Huminiecki L."/>
            <person name="Iacono M."/>
            <person name="Ikeo K."/>
            <person name="Iwama A."/>
            <person name="Ishikawa T."/>
            <person name="Jakt M."/>
            <person name="Kanapin A."/>
            <person name="Katoh M."/>
            <person name="Kawasawa Y."/>
            <person name="Kelso J."/>
            <person name="Kitamura H."/>
            <person name="Kitano H."/>
            <person name="Kollias G."/>
            <person name="Krishnan S.P."/>
            <person name="Kruger A."/>
            <person name="Kummerfeld S.K."/>
            <person name="Kurochkin I.V."/>
            <person name="Lareau L.F."/>
            <person name="Lazarevic D."/>
            <person name="Lipovich L."/>
            <person name="Liu J."/>
            <person name="Liuni S."/>
            <person name="McWilliam S."/>
            <person name="Madan Babu M."/>
            <person name="Madera M."/>
            <person name="Marchionni L."/>
            <person name="Matsuda H."/>
            <person name="Matsuzawa S."/>
            <person name="Miki H."/>
            <person name="Mignone F."/>
            <person name="Miyake S."/>
            <person name="Morris K."/>
            <person name="Mottagui-Tabar S."/>
            <person name="Mulder N."/>
            <person name="Nakano N."/>
            <person name="Nakauchi H."/>
            <person name="Ng P."/>
            <person name="Nilsson R."/>
            <person name="Nishiguchi S."/>
            <person name="Nishikawa S."/>
            <person name="Nori F."/>
            <person name="Ohara O."/>
            <person name="Okazaki Y."/>
            <person name="Orlando V."/>
            <person name="Pang K.C."/>
            <person name="Pavan W.J."/>
            <person name="Pavesi G."/>
            <person name="Pesole G."/>
            <person name="Petrovsky N."/>
            <person name="Piazza S."/>
            <person name="Reed J."/>
            <person name="Reid J.F."/>
            <person name="Ring B.Z."/>
            <person name="Ringwald M."/>
            <person name="Rost B."/>
            <person name="Ruan Y."/>
            <person name="Salzberg S.L."/>
            <person name="Sandelin A."/>
            <person name="Schneider C."/>
            <person name="Schoenbach C."/>
            <person name="Sekiguchi K."/>
            <person name="Semple C.A."/>
            <person name="Seno S."/>
            <person name="Sessa L."/>
            <person name="Sheng Y."/>
            <person name="Shibata Y."/>
            <person name="Shimada H."/>
            <person name="Shimada K."/>
            <person name="Silva D."/>
            <person name="Sinclair B."/>
            <person name="Sperling S."/>
            <person name="Stupka E."/>
            <person name="Sugiura K."/>
            <person name="Sultana R."/>
            <person name="Takenaka Y."/>
            <person name="Taki K."/>
            <person name="Tammoja K."/>
            <person name="Tan S.L."/>
            <person name="Tang S."/>
            <person name="Taylor M.S."/>
            <person name="Tegner J."/>
            <person name="Teichmann S.A."/>
            <person name="Ueda H.R."/>
            <person name="van Nimwegen E."/>
            <person name="Verardo R."/>
            <person name="Wei C.L."/>
            <person name="Yagi K."/>
            <person name="Yamanishi H."/>
            <person name="Zabarovsky E."/>
            <person name="Zhu S."/>
            <person name="Zimmer A."/>
            <person name="Hide W."/>
            <person name="Bult C."/>
            <person name="Grimmond S.M."/>
            <person name="Teasdale R.D."/>
            <person name="Liu E.T."/>
            <person name="Brusic V."/>
            <person name="Quackenbush J."/>
            <person name="Wahlestedt C."/>
            <person name="Mattick J.S."/>
            <person name="Hume D.A."/>
            <person name="Kai C."/>
            <person name="Sasaki D."/>
            <person name="Tomaru Y."/>
            <person name="Fukuda S."/>
            <person name="Kanamori-Katayama M."/>
            <person name="Suzuki M."/>
            <person name="Aoki J."/>
            <person name="Arakawa T."/>
            <person name="Iida J."/>
            <person name="Imamura K."/>
            <person name="Itoh M."/>
            <person name="Kato T."/>
            <person name="Kawaji H."/>
            <person name="Kawagashira N."/>
            <person name="Kawashima T."/>
            <person name="Kojima M."/>
            <person name="Kondo S."/>
            <person name="Konno H."/>
            <person name="Nakano K."/>
            <person name="Ninomiya N."/>
            <person name="Nishio T."/>
            <person name="Okada M."/>
            <person name="Plessy C."/>
            <person name="Shibata K."/>
            <person name="Shiraki T."/>
            <person name="Suzuki S."/>
            <person name="Tagami M."/>
            <person name="Waki K."/>
            <person name="Watahiki A."/>
            <person name="Okamura-Oho Y."/>
            <person name="Suzuki H."/>
            <person name="Kawai J."/>
            <person name="Hayashizaki Y."/>
        </authorList>
    </citation>
    <scope>NUCLEOTIDE SEQUENCE [LARGE SCALE MRNA] OF 439-807</scope>
    <source>
        <strain>C57BL/6J</strain>
        <tissue>Embryo</tissue>
    </source>
</reference>
<reference key="3">
    <citation type="journal article" date="2009" name="Immunity">
        <title>The phagosomal proteome in interferon-gamma-activated macrophages.</title>
        <authorList>
            <person name="Trost M."/>
            <person name="English L."/>
            <person name="Lemieux S."/>
            <person name="Courcelles M."/>
            <person name="Desjardins M."/>
            <person name="Thibault P."/>
        </authorList>
    </citation>
    <scope>IDENTIFICATION BY MASS SPECTROMETRY [LARGE SCALE ANALYSIS]</scope>
</reference>
<reference key="4">
    <citation type="journal article" date="2010" name="Cell">
        <title>A tissue-specific atlas of mouse protein phosphorylation and expression.</title>
        <authorList>
            <person name="Huttlin E.L."/>
            <person name="Jedrychowski M.P."/>
            <person name="Elias J.E."/>
            <person name="Goswami T."/>
            <person name="Rad R."/>
            <person name="Beausoleil S.A."/>
            <person name="Villen J."/>
            <person name="Haas W."/>
            <person name="Sowa M.E."/>
            <person name="Gygi S.P."/>
        </authorList>
    </citation>
    <scope>PHOSPHORYLATION [LARGE SCALE ANALYSIS] AT SER-777 AND SER-779</scope>
    <scope>IDENTIFICATION BY MASS SPECTROMETRY [LARGE SCALE ANALYSIS]</scope>
    <source>
        <tissue>Brain</tissue>
        <tissue>Brown adipose tissue</tissue>
        <tissue>Heart</tissue>
        <tissue>Kidney</tissue>
        <tissue>Lung</tissue>
        <tissue>Spleen</tissue>
        <tissue>Testis</tissue>
    </source>
</reference>
<dbReference type="EMBL" id="BC002259">
    <property type="protein sequence ID" value="AAH02259.1"/>
    <property type="molecule type" value="mRNA"/>
</dbReference>
<dbReference type="EMBL" id="BC016237">
    <property type="protein sequence ID" value="AAH16237.1"/>
    <property type="molecule type" value="mRNA"/>
</dbReference>
<dbReference type="EMBL" id="BC024870">
    <property type="protein sequence ID" value="AAH24870.1"/>
    <property type="molecule type" value="mRNA"/>
</dbReference>
<dbReference type="EMBL" id="AK011994">
    <property type="protein sequence ID" value="BAB27965.1"/>
    <property type="status" value="ALT_INIT"/>
    <property type="molecule type" value="mRNA"/>
</dbReference>
<dbReference type="CCDS" id="CCDS19290.1"/>
<dbReference type="RefSeq" id="NP_077175.1">
    <property type="nucleotide sequence ID" value="NM_024213.2"/>
</dbReference>
<dbReference type="SMR" id="Q91W96"/>
<dbReference type="CORUM" id="Q91W96"/>
<dbReference type="FunCoup" id="Q91W96">
    <property type="interactions" value="3038"/>
</dbReference>
<dbReference type="IntAct" id="Q91W96">
    <property type="interactions" value="1"/>
</dbReference>
<dbReference type="MINT" id="Q91W96"/>
<dbReference type="STRING" id="10090.ENSMUSP00000031072"/>
<dbReference type="ChEMBL" id="CHEMBL4879498"/>
<dbReference type="iPTMnet" id="Q91W96"/>
<dbReference type="PhosphoSitePlus" id="Q91W96"/>
<dbReference type="jPOST" id="Q91W96"/>
<dbReference type="PaxDb" id="10090-ENSMUSP00000031072"/>
<dbReference type="ProteomicsDB" id="296368"/>
<dbReference type="Pumba" id="Q91W96"/>
<dbReference type="Antibodypedia" id="23215">
    <property type="antibodies" value="218 antibodies from 34 providers"/>
</dbReference>
<dbReference type="DNASU" id="52206"/>
<dbReference type="Ensembl" id="ENSMUST00000031072.14">
    <property type="protein sequence ID" value="ENSMUSP00000031072.8"/>
    <property type="gene ID" value="ENSMUSG00000029176.14"/>
</dbReference>
<dbReference type="GeneID" id="52206"/>
<dbReference type="KEGG" id="mmu:52206"/>
<dbReference type="UCSC" id="uc008xkw.1">
    <property type="organism name" value="mouse"/>
</dbReference>
<dbReference type="AGR" id="MGI:1098673"/>
<dbReference type="CTD" id="29945"/>
<dbReference type="MGI" id="MGI:1098673">
    <property type="gene designation" value="Anapc4"/>
</dbReference>
<dbReference type="VEuPathDB" id="HostDB:ENSMUSG00000029176"/>
<dbReference type="eggNOG" id="KOG4640">
    <property type="taxonomic scope" value="Eukaryota"/>
</dbReference>
<dbReference type="GeneTree" id="ENSGT00390000004612"/>
<dbReference type="HOGENOM" id="CLU_018724_0_0_1"/>
<dbReference type="InParanoid" id="Q91W96"/>
<dbReference type="OMA" id="HCKLFVP"/>
<dbReference type="OrthoDB" id="2110451at2759"/>
<dbReference type="PhylomeDB" id="Q91W96"/>
<dbReference type="TreeFam" id="TF105443"/>
<dbReference type="Reactome" id="R-MMU-141430">
    <property type="pathway name" value="Inactivation of APC/C via direct inhibition of the APC/C complex"/>
</dbReference>
<dbReference type="Reactome" id="R-MMU-174048">
    <property type="pathway name" value="APC/C:Cdc20 mediated degradation of Cyclin B"/>
</dbReference>
<dbReference type="Reactome" id="R-MMU-174084">
    <property type="pathway name" value="Autodegradation of Cdh1 by Cdh1:APC/C"/>
</dbReference>
<dbReference type="Reactome" id="R-MMU-174154">
    <property type="pathway name" value="APC/C:Cdc20 mediated degradation of Securin"/>
</dbReference>
<dbReference type="Reactome" id="R-MMU-174178">
    <property type="pathway name" value="APC/C:Cdh1 mediated degradation of Cdc20 and other APC/C:Cdh1 targeted proteins in late mitosis/early G1"/>
</dbReference>
<dbReference type="Reactome" id="R-MMU-174184">
    <property type="pathway name" value="Cdc20:Phospho-APC/C mediated degradation of Cyclin A"/>
</dbReference>
<dbReference type="Reactome" id="R-MMU-176407">
    <property type="pathway name" value="Conversion from APC/C:Cdc20 to APC/C:Cdh1 in late anaphase"/>
</dbReference>
<dbReference type="Reactome" id="R-MMU-176408">
    <property type="pathway name" value="Regulation of APC/C activators between G1/S and early anaphase"/>
</dbReference>
<dbReference type="Reactome" id="R-MMU-176409">
    <property type="pathway name" value="APC/C:Cdc20 mediated degradation of mitotic proteins"/>
</dbReference>
<dbReference type="Reactome" id="R-MMU-176412">
    <property type="pathway name" value="Phosphorylation of the APC/C"/>
</dbReference>
<dbReference type="Reactome" id="R-MMU-179409">
    <property type="pathway name" value="APC-Cdc20 mediated degradation of Nek2A"/>
</dbReference>
<dbReference type="Reactome" id="R-MMU-2467813">
    <property type="pathway name" value="Separation of Sister Chromatids"/>
</dbReference>
<dbReference type="Reactome" id="R-MMU-2559582">
    <property type="pathway name" value="Senescence-Associated Secretory Phenotype (SASP)"/>
</dbReference>
<dbReference type="Reactome" id="R-MMU-68867">
    <property type="pathway name" value="Assembly of the pre-replicative complex"/>
</dbReference>
<dbReference type="Reactome" id="R-MMU-69017">
    <property type="pathway name" value="CDK-mediated phosphorylation and removal of Cdc6"/>
</dbReference>
<dbReference type="Reactome" id="R-MMU-983168">
    <property type="pathway name" value="Antigen processing: Ubiquitination &amp; Proteasome degradation"/>
</dbReference>
<dbReference type="UniPathway" id="UPA00143"/>
<dbReference type="BioGRID-ORCS" id="52206">
    <property type="hits" value="19 hits in 79 CRISPR screens"/>
</dbReference>
<dbReference type="ChiTaRS" id="Anapc4">
    <property type="organism name" value="mouse"/>
</dbReference>
<dbReference type="PRO" id="PR:Q91W96"/>
<dbReference type="Proteomes" id="UP000000589">
    <property type="component" value="Chromosome 5"/>
</dbReference>
<dbReference type="RNAct" id="Q91W96">
    <property type="molecule type" value="protein"/>
</dbReference>
<dbReference type="Bgee" id="ENSMUSG00000029176">
    <property type="expression patterns" value="Expressed in floor plate of midbrain and 276 other cell types or tissues"/>
</dbReference>
<dbReference type="ExpressionAtlas" id="Q91W96">
    <property type="expression patterns" value="baseline and differential"/>
</dbReference>
<dbReference type="GO" id="GO:0005680">
    <property type="term" value="C:anaphase-promoting complex"/>
    <property type="evidence" value="ECO:0000250"/>
    <property type="project" value="UniProtKB"/>
</dbReference>
<dbReference type="GO" id="GO:0005634">
    <property type="term" value="C:nucleus"/>
    <property type="evidence" value="ECO:0000250"/>
    <property type="project" value="UniProtKB"/>
</dbReference>
<dbReference type="GO" id="GO:0019903">
    <property type="term" value="F:protein phosphatase binding"/>
    <property type="evidence" value="ECO:0007669"/>
    <property type="project" value="Ensembl"/>
</dbReference>
<dbReference type="GO" id="GO:0031145">
    <property type="term" value="P:anaphase-promoting complex-dependent catabolic process"/>
    <property type="evidence" value="ECO:0000250"/>
    <property type="project" value="UniProtKB"/>
</dbReference>
<dbReference type="GO" id="GO:0051301">
    <property type="term" value="P:cell division"/>
    <property type="evidence" value="ECO:0007669"/>
    <property type="project" value="UniProtKB-KW"/>
</dbReference>
<dbReference type="GO" id="GO:0141198">
    <property type="term" value="P:protein branched polyubiquitination"/>
    <property type="evidence" value="ECO:0000250"/>
    <property type="project" value="UniProtKB"/>
</dbReference>
<dbReference type="GO" id="GO:0070979">
    <property type="term" value="P:protein K11-linked ubiquitination"/>
    <property type="evidence" value="ECO:0000250"/>
    <property type="project" value="UniProtKB"/>
</dbReference>
<dbReference type="GO" id="GO:0070936">
    <property type="term" value="P:protein K48-linked ubiquitination"/>
    <property type="evidence" value="ECO:0000250"/>
    <property type="project" value="UniProtKB"/>
</dbReference>
<dbReference type="GO" id="GO:0030071">
    <property type="term" value="P:regulation of mitotic metaphase/anaphase transition"/>
    <property type="evidence" value="ECO:0007669"/>
    <property type="project" value="InterPro"/>
</dbReference>
<dbReference type="FunFam" id="2.130.10.10:FF:001243">
    <property type="entry name" value="Anaphase-promoting complex subunit 4"/>
    <property type="match status" value="1"/>
</dbReference>
<dbReference type="Gene3D" id="2.130.10.10">
    <property type="entry name" value="YVTN repeat-like/Quinoprotein amine dehydrogenase"/>
    <property type="match status" value="1"/>
</dbReference>
<dbReference type="InterPro" id="IPR024789">
    <property type="entry name" value="APC4"/>
</dbReference>
<dbReference type="InterPro" id="IPR024977">
    <property type="entry name" value="Apc4-like_WD40_dom"/>
</dbReference>
<dbReference type="InterPro" id="IPR056358">
    <property type="entry name" value="APC4_C"/>
</dbReference>
<dbReference type="InterPro" id="IPR024790">
    <property type="entry name" value="APC4_long_dom"/>
</dbReference>
<dbReference type="InterPro" id="IPR017169">
    <property type="entry name" value="APC4_metazoa"/>
</dbReference>
<dbReference type="InterPro" id="IPR015943">
    <property type="entry name" value="WD40/YVTN_repeat-like_dom_sf"/>
</dbReference>
<dbReference type="InterPro" id="IPR036322">
    <property type="entry name" value="WD40_repeat_dom_sf"/>
</dbReference>
<dbReference type="PANTHER" id="PTHR13260">
    <property type="entry name" value="ANAPHASE PROMOTING COMPLEX SUBUNIT 4 APC4"/>
    <property type="match status" value="1"/>
</dbReference>
<dbReference type="PANTHER" id="PTHR13260:SF0">
    <property type="entry name" value="ANAPHASE-PROMOTING COMPLEX SUBUNIT 4"/>
    <property type="match status" value="1"/>
</dbReference>
<dbReference type="Pfam" id="PF12896">
    <property type="entry name" value="ANAPC4"/>
    <property type="match status" value="1"/>
</dbReference>
<dbReference type="Pfam" id="PF12894">
    <property type="entry name" value="ANAPC4_WD40"/>
    <property type="match status" value="1"/>
</dbReference>
<dbReference type="Pfam" id="PF23405">
    <property type="entry name" value="WD40_APC4_C-half"/>
    <property type="match status" value="1"/>
</dbReference>
<dbReference type="PIRSF" id="PIRSF037303">
    <property type="entry name" value="APC4"/>
    <property type="match status" value="1"/>
</dbReference>
<dbReference type="SUPFAM" id="SSF50978">
    <property type="entry name" value="WD40 repeat-like"/>
    <property type="match status" value="1"/>
</dbReference>
<keyword id="KW-0131">Cell cycle</keyword>
<keyword id="KW-0132">Cell division</keyword>
<keyword id="KW-1017">Isopeptide bond</keyword>
<keyword id="KW-0498">Mitosis</keyword>
<keyword id="KW-0539">Nucleus</keyword>
<keyword id="KW-0597">Phosphoprotein</keyword>
<keyword id="KW-1185">Reference proteome</keyword>
<keyword id="KW-0832">Ubl conjugation</keyword>
<keyword id="KW-0833">Ubl conjugation pathway</keyword>
<organism>
    <name type="scientific">Mus musculus</name>
    <name type="common">Mouse</name>
    <dbReference type="NCBI Taxonomy" id="10090"/>
    <lineage>
        <taxon>Eukaryota</taxon>
        <taxon>Metazoa</taxon>
        <taxon>Chordata</taxon>
        <taxon>Craniata</taxon>
        <taxon>Vertebrata</taxon>
        <taxon>Euteleostomi</taxon>
        <taxon>Mammalia</taxon>
        <taxon>Eutheria</taxon>
        <taxon>Euarchontoglires</taxon>
        <taxon>Glires</taxon>
        <taxon>Rodentia</taxon>
        <taxon>Myomorpha</taxon>
        <taxon>Muroidea</taxon>
        <taxon>Muridae</taxon>
        <taxon>Murinae</taxon>
        <taxon>Mus</taxon>
        <taxon>Mus</taxon>
    </lineage>
</organism>
<sequence length="807" mass="91708">MLRFPTCFPSFRVVGEKQLPQEIIFLAWSPKRDLIALANTTGEVLLHRLASFHRVWSFPPNESTGKEVTCLAWRPDGKLLAFALADTKKIILCDVEKPESLHSFSVEAPVSCMHWTEVTVESSVLTSFYNAEDESNLLLPKLPTLPKNYNSTSKIFSEENSDEIIKLLGDVRLNILVLGGSSGFIELYAYGMFKIARVTGIAGTCIALCLSSDLKSLSVVTEVSSGGESEVSYFQLETNLLYSFLPEVTRMARKFTHISALLQYINLSLTCMCEAWEEILMQMDSRLTKFVQEKPTTTSVQDEFMHLLLWGKASAELQTLLMNQLTVKGLKKLGQSIESSYSSIQKLVISHLQSGSESLLYHLSELKGMASWKQKYEPLGLDAAGIEDAITAVGSFILKANELLQVIDSSMKNFKAFFRWLYVAMLRMTEDHVLPELNKMTQKDITFVAEFLTEHFNEAPDLYNRKGKYFNVERVGQYLKDEDDDLVSPPNTEGNQWYDFLQNSTHLKESPLLFPYYPRKSLHFVKRRMENVIDQCLQKPADVIGRSMNQAICIPLYKDARSMDCARRLLKFPFLWNNKTSNLHYLLFTILEDSVYKMCILRRHTDISQSVSNGLIGIKFGSFTSASADKVRRSSYSCLDAQFYDDETVTVILKDSMGREGRDRILVQLSLSLVYNSEDSDEYEFTGSYSTRLDEQGSIIPTRTMHFEKHWRLLESMRAQYVAGNGLRKVSCVLSSNLRHVRVFEMDIDDEWEIDESSDDEEEAGGKPVKIKEEVLSESETEAHQDAAALDPDVVIKVEKLDPELDS</sequence>
<feature type="chain" id="PRO_0000064596" description="Anaphase-promoting complex subunit 4">
    <location>
        <begin position="1"/>
        <end position="807"/>
    </location>
</feature>
<feature type="region of interest" description="Disordered" evidence="2">
    <location>
        <begin position="755"/>
        <end position="788"/>
    </location>
</feature>
<feature type="compositionally biased region" description="Basic and acidic residues" evidence="2">
    <location>
        <begin position="770"/>
        <end position="785"/>
    </location>
</feature>
<feature type="modified residue" description="Phosphotyrosine" evidence="1">
    <location>
        <position position="469"/>
    </location>
</feature>
<feature type="modified residue" description="Phosphoserine" evidence="1">
    <location>
        <position position="757"/>
    </location>
</feature>
<feature type="modified residue" description="Phosphoserine" evidence="1">
    <location>
        <position position="758"/>
    </location>
</feature>
<feature type="modified residue" description="Phosphoserine" evidence="4">
    <location>
        <position position="777"/>
    </location>
</feature>
<feature type="modified residue" description="Phosphoserine" evidence="4">
    <location>
        <position position="779"/>
    </location>
</feature>
<feature type="cross-link" description="Glycyl lysine isopeptide (Lys-Gly) (interchain with G-Cter in SUMO2)" evidence="1">
    <location>
        <position position="772"/>
    </location>
</feature>
<feature type="cross-link" description="Glycyl lysine isopeptide (Lys-Gly) (interchain with G-Cter in SUMO2)" evidence="1">
    <location>
        <position position="797"/>
    </location>
</feature>
<comment type="function">
    <text evidence="1">Component of the anaphase promoting complex/cyclosome (APC/C), a cell cycle-regulated E3 ubiquitin ligase that controls progression through mitosis and the G1 phase of the cell cycle. The APC/C complex acts by mediating ubiquitination and subsequent degradation of target proteins: it mainly mediates the formation of 'Lys-11'-linked polyubiquitin chains and, to a lower extent, the formation of 'Lys-48'- and 'Lys-63'-linked polyubiquitin chains. The APC/C complex catalyzes assembly of branched 'Lys-11'-/'Lys-48'-linked branched ubiquitin chains on target proteins.</text>
</comment>
<comment type="pathway">
    <text evidence="1">Protein modification; protein ubiquitination.</text>
</comment>
<comment type="subunit">
    <text evidence="1">The mammalian APC/C is composed at least of 14 distinct subunits ANAPC1, ANAPC2, CDC27/APC3, ANAPC4, ANAPC5, CDC16/APC6, ANAPC7, CDC23/APC8, ANAPC10, ANAPC11, CDC26/APC12, ANAPC13, ANAPC15 and ANAPC16 that assemble into a complex of at least 19 chains with a combined molecular mass of around 1.2 MDa; APC/C interacts with FZR1 and FBXO5. In the context of the APC/C complex, directly interacts with UBE2S. Interacts with FBXO43.</text>
</comment>
<comment type="subcellular location">
    <subcellularLocation>
        <location evidence="1">Nucleus</location>
    </subcellularLocation>
</comment>
<comment type="similarity">
    <text evidence="3">Belongs to the APC4 family.</text>
</comment>
<comment type="sequence caution" evidence="3">
    <conflict type="erroneous initiation">
        <sequence resource="EMBL-CDS" id="BAB27965"/>
    </conflict>
    <text>Truncated N-terminus.</text>
</comment>
<name>APC4_MOUSE</name>
<accession>Q91W96</accession>
<accession>Q99LR5</accession>
<accession>Q9CZZ0</accession>